<keyword id="KW-0027">Amidation</keyword>
<keyword id="KW-0903">Direct protein sequencing</keyword>
<keyword id="KW-0528">Neurotoxin</keyword>
<keyword id="KW-0964">Secreted</keyword>
<keyword id="KW-0800">Toxin</keyword>
<accession>P0CJ22</accession>
<reference key="1">
    <citation type="journal article" date="2010" name="Acta Biochim. Biophys. Sin.">
        <title>Identification of neuropeptide Y-like conopeptides from the venom of Conus betulinus.</title>
        <authorList>
            <person name="Wu X."/>
            <person name="Shao X."/>
            <person name="Guo Z.Y."/>
            <person name="Chi C.W."/>
        </authorList>
    </citation>
    <scope>PROTEIN SEQUENCE</scope>
    <scope>FUNCTION</scope>
    <scope>BIOASSAY</scope>
    <scope>MASS SPECTROMETRY</scope>
    <scope>AMIDATION AT PHE-37</scope>
    <scope>SUBCELLULAR LOCATION</scope>
    <source>
        <tissue>Venom</tissue>
    </source>
</reference>
<proteinExistence type="evidence at protein level"/>
<feature type="chain" id="PRO_0000405962" description="Neuropeptide Y1-like conopeptide" evidence="1">
    <location>
        <begin position="1"/>
        <end position="37"/>
    </location>
</feature>
<feature type="modified residue" description="Phenylalanine amide" evidence="4">
    <location>
        <position position="37"/>
    </location>
</feature>
<comment type="function">
    <text evidence="1">Causes hyperactivity such as jumping, rapid circling and tail flicking, when intraventricularly injected into mice brain.</text>
</comment>
<comment type="subcellular location">
    <subcellularLocation>
        <location evidence="1">Secreted</location>
    </subcellularLocation>
</comment>
<comment type="tissue specificity">
    <text evidence="4">Expressed by the venom duct.</text>
</comment>
<comment type="mass spectrometry" mass="4391.0" method="Unknown" evidence="1"/>
<comment type="miscellaneous">
    <text evidence="3">The mature peptide does not contain cysteine residue.</text>
</comment>
<comment type="similarity">
    <text evidence="3">Belongs to the NPY family.</text>
</comment>
<sequence length="37" mass="4392">TVSDPPARPAVFHSREELMNYVRELNRYFAIVGRPRF</sequence>
<dbReference type="SMR" id="P0CJ22"/>
<dbReference type="GO" id="GO:0005576">
    <property type="term" value="C:extracellular region"/>
    <property type="evidence" value="ECO:0007669"/>
    <property type="project" value="UniProtKB-SubCell"/>
</dbReference>
<dbReference type="GO" id="GO:0005179">
    <property type="term" value="F:hormone activity"/>
    <property type="evidence" value="ECO:0007669"/>
    <property type="project" value="InterPro"/>
</dbReference>
<dbReference type="GO" id="GO:0090729">
    <property type="term" value="F:toxin activity"/>
    <property type="evidence" value="ECO:0007669"/>
    <property type="project" value="UniProtKB-KW"/>
</dbReference>
<dbReference type="InterPro" id="IPR001955">
    <property type="entry name" value="Pancreatic_hormone-like"/>
</dbReference>
<dbReference type="InterPro" id="IPR020392">
    <property type="entry name" value="Pancreatic_hormone-like_CS"/>
</dbReference>
<dbReference type="Pfam" id="PF00159">
    <property type="entry name" value="Hormone_3"/>
    <property type="match status" value="1"/>
</dbReference>
<dbReference type="SMART" id="SM00309">
    <property type="entry name" value="PAH"/>
    <property type="match status" value="1"/>
</dbReference>
<dbReference type="PROSITE" id="PS00265">
    <property type="entry name" value="PANCREATIC_HORMONE_1"/>
    <property type="match status" value="1"/>
</dbReference>
<dbReference type="PROSITE" id="PS50276">
    <property type="entry name" value="PANCREATIC_HORMONE_2"/>
    <property type="match status" value="1"/>
</dbReference>
<name>NPY1_CONBE</name>
<evidence type="ECO:0000269" key="1">
    <source>
    </source>
</evidence>
<evidence type="ECO:0000303" key="2">
    <source>
    </source>
</evidence>
<evidence type="ECO:0000305" key="3"/>
<evidence type="ECO:0000305" key="4">
    <source>
    </source>
</evidence>
<organism>
    <name type="scientific">Conus betulinus</name>
    <name type="common">Beech cone</name>
    <dbReference type="NCBI Taxonomy" id="89764"/>
    <lineage>
        <taxon>Eukaryota</taxon>
        <taxon>Metazoa</taxon>
        <taxon>Spiralia</taxon>
        <taxon>Lophotrochozoa</taxon>
        <taxon>Mollusca</taxon>
        <taxon>Gastropoda</taxon>
        <taxon>Caenogastropoda</taxon>
        <taxon>Neogastropoda</taxon>
        <taxon>Conoidea</taxon>
        <taxon>Conidae</taxon>
        <taxon>Conus</taxon>
        <taxon>Dendroconus</taxon>
    </lineage>
</organism>
<protein>
    <recommendedName>
        <fullName>Neuropeptide Y1-like conopeptide</fullName>
        <shortName evidence="2">Cono-NPY1</shortName>
        <shortName>NPY1-like conopeptide</shortName>
    </recommendedName>
</protein>